<name>ISPG_MYCBO</name>
<accession>Q7TXN6</accession>
<accession>A0A1R3Y2G5</accession>
<accession>X2BM90</accession>
<feature type="chain" id="PRO_0000190597" description="4-hydroxy-3-methylbut-2-en-1-yl diphosphate synthase (flavodoxin)">
    <location>
        <begin position="1"/>
        <end position="387"/>
    </location>
</feature>
<feature type="binding site" evidence="1">
    <location>
        <position position="280"/>
    </location>
    <ligand>
        <name>[4Fe-4S] cluster</name>
        <dbReference type="ChEBI" id="CHEBI:49883"/>
    </ligand>
</feature>
<feature type="binding site" evidence="1">
    <location>
        <position position="283"/>
    </location>
    <ligand>
        <name>[4Fe-4S] cluster</name>
        <dbReference type="ChEBI" id="CHEBI:49883"/>
    </ligand>
</feature>
<feature type="binding site" evidence="1">
    <location>
        <position position="315"/>
    </location>
    <ligand>
        <name>[4Fe-4S] cluster</name>
        <dbReference type="ChEBI" id="CHEBI:49883"/>
    </ligand>
</feature>
<feature type="binding site" evidence="1">
    <location>
        <position position="322"/>
    </location>
    <ligand>
        <name>[4Fe-4S] cluster</name>
        <dbReference type="ChEBI" id="CHEBI:49883"/>
    </ligand>
</feature>
<protein>
    <recommendedName>
        <fullName evidence="1">4-hydroxy-3-methylbut-2-en-1-yl diphosphate synthase (flavodoxin)</fullName>
        <ecNumber evidence="1">1.17.7.3</ecNumber>
    </recommendedName>
    <alternativeName>
        <fullName evidence="1">1-hydroxy-2-methyl-2-(E)-butenyl 4-diphosphate synthase</fullName>
    </alternativeName>
</protein>
<dbReference type="EC" id="1.17.7.3" evidence="1"/>
<dbReference type="EMBL" id="LT708304">
    <property type="protein sequence ID" value="SIU01514.1"/>
    <property type="molecule type" value="Genomic_DNA"/>
</dbReference>
<dbReference type="RefSeq" id="NP_856538.1">
    <property type="nucleotide sequence ID" value="NC_002945.3"/>
</dbReference>
<dbReference type="RefSeq" id="WP_010950793.1">
    <property type="nucleotide sequence ID" value="NC_002945.4"/>
</dbReference>
<dbReference type="SMR" id="Q7TXN6"/>
<dbReference type="KEGG" id="mbo:BQ2027_MB2893C"/>
<dbReference type="PATRIC" id="fig|233413.5.peg.3175"/>
<dbReference type="UniPathway" id="UPA00056">
    <property type="reaction ID" value="UER00096"/>
</dbReference>
<dbReference type="Proteomes" id="UP000001419">
    <property type="component" value="Chromosome"/>
</dbReference>
<dbReference type="GO" id="GO:0051539">
    <property type="term" value="F:4 iron, 4 sulfur cluster binding"/>
    <property type="evidence" value="ECO:0007669"/>
    <property type="project" value="UniProtKB-UniRule"/>
</dbReference>
<dbReference type="GO" id="GO:0046429">
    <property type="term" value="F:4-hydroxy-3-methylbut-2-en-1-yl diphosphate synthase activity (ferredoxin)"/>
    <property type="evidence" value="ECO:0007669"/>
    <property type="project" value="UniProtKB-UniRule"/>
</dbReference>
<dbReference type="GO" id="GO:0141197">
    <property type="term" value="F:4-hydroxy-3-methylbut-2-enyl-diphosphate synthase activity (flavodoxin)"/>
    <property type="evidence" value="ECO:0007669"/>
    <property type="project" value="UniProtKB-EC"/>
</dbReference>
<dbReference type="GO" id="GO:0005506">
    <property type="term" value="F:iron ion binding"/>
    <property type="evidence" value="ECO:0007669"/>
    <property type="project" value="InterPro"/>
</dbReference>
<dbReference type="GO" id="GO:0019288">
    <property type="term" value="P:isopentenyl diphosphate biosynthetic process, methylerythritol 4-phosphate pathway"/>
    <property type="evidence" value="ECO:0007669"/>
    <property type="project" value="UniProtKB-UniRule"/>
</dbReference>
<dbReference type="GO" id="GO:0016114">
    <property type="term" value="P:terpenoid biosynthetic process"/>
    <property type="evidence" value="ECO:0007669"/>
    <property type="project" value="InterPro"/>
</dbReference>
<dbReference type="FunFam" id="3.20.20.20:FF:000003">
    <property type="entry name" value="4-hydroxy-3-methylbut-2-en-1-yl diphosphate synthase (flavodoxin)"/>
    <property type="match status" value="1"/>
</dbReference>
<dbReference type="FunFam" id="3.30.413.10:FF:000001">
    <property type="entry name" value="4-hydroxy-3-methylbut-2-en-1-yl diphosphate synthase (flavodoxin)"/>
    <property type="match status" value="1"/>
</dbReference>
<dbReference type="Gene3D" id="3.20.20.20">
    <property type="entry name" value="Dihydropteroate synthase-like"/>
    <property type="match status" value="1"/>
</dbReference>
<dbReference type="Gene3D" id="3.30.413.10">
    <property type="entry name" value="Sulfite Reductase Hemoprotein, domain 1"/>
    <property type="match status" value="1"/>
</dbReference>
<dbReference type="HAMAP" id="MF_00159">
    <property type="entry name" value="IspG"/>
    <property type="match status" value="1"/>
</dbReference>
<dbReference type="InterPro" id="IPR011005">
    <property type="entry name" value="Dihydropteroate_synth-like_sf"/>
</dbReference>
<dbReference type="InterPro" id="IPR016425">
    <property type="entry name" value="IspG_bac"/>
</dbReference>
<dbReference type="InterPro" id="IPR004588">
    <property type="entry name" value="IspG_bac-typ"/>
</dbReference>
<dbReference type="InterPro" id="IPR045854">
    <property type="entry name" value="NO2/SO3_Rdtase_4Fe4S_sf"/>
</dbReference>
<dbReference type="NCBIfam" id="TIGR00612">
    <property type="entry name" value="ispG_gcpE"/>
    <property type="match status" value="1"/>
</dbReference>
<dbReference type="NCBIfam" id="NF001540">
    <property type="entry name" value="PRK00366.1"/>
    <property type="match status" value="1"/>
</dbReference>
<dbReference type="PANTHER" id="PTHR30454">
    <property type="entry name" value="4-HYDROXY-3-METHYLBUT-2-EN-1-YL DIPHOSPHATE SYNTHASE"/>
    <property type="match status" value="1"/>
</dbReference>
<dbReference type="PANTHER" id="PTHR30454:SF0">
    <property type="entry name" value="4-HYDROXY-3-METHYLBUT-2-EN-1-YL DIPHOSPHATE SYNTHASE (FERREDOXIN), CHLOROPLASTIC"/>
    <property type="match status" value="1"/>
</dbReference>
<dbReference type="Pfam" id="PF04551">
    <property type="entry name" value="GcpE"/>
    <property type="match status" value="1"/>
</dbReference>
<dbReference type="PIRSF" id="PIRSF004640">
    <property type="entry name" value="IspG"/>
    <property type="match status" value="1"/>
</dbReference>
<dbReference type="SUPFAM" id="SSF51717">
    <property type="entry name" value="Dihydropteroate synthetase-like"/>
    <property type="match status" value="1"/>
</dbReference>
<dbReference type="SUPFAM" id="SSF56014">
    <property type="entry name" value="Nitrite and sulphite reductase 4Fe-4S domain-like"/>
    <property type="match status" value="1"/>
</dbReference>
<proteinExistence type="inferred from homology"/>
<organism>
    <name type="scientific">Mycobacterium bovis (strain ATCC BAA-935 / AF2122/97)</name>
    <dbReference type="NCBI Taxonomy" id="233413"/>
    <lineage>
        <taxon>Bacteria</taxon>
        <taxon>Bacillati</taxon>
        <taxon>Actinomycetota</taxon>
        <taxon>Actinomycetes</taxon>
        <taxon>Mycobacteriales</taxon>
        <taxon>Mycobacteriaceae</taxon>
        <taxon>Mycobacterium</taxon>
        <taxon>Mycobacterium tuberculosis complex</taxon>
    </lineage>
</organism>
<gene>
    <name evidence="1" type="primary">ispG</name>
    <name type="synonym">gcpE</name>
    <name type="ordered locus">BQ2027_MB2893C</name>
</gene>
<sequence>MTVGLGMPQPPAPTLAPRRATRQLMVGNVGVGSDHPVSVQSMCTTKTHDVNSTLQQIAELTAAGCDIVRVACPRQEDADALAEIARHSQIPVVADIHFQPRYIFAAIDAGCAAVRVNPGNIKEFDGRVGEVAKAAGAAGIPIRIGVNAGSLDKRFMEKYGKATPEALVESALWEASLFEEHGFGDIKISVKHNDPVVMVAAYELLAARCDYPLHLGVTEAGPAFQGTIKSAVAFGALLSRGIGDTIRVSLSAPPVEEVKVGNQVLESLNLRPRSLEIVSCPSCGRAQVDVYTLANEVTAGLDGLDVPLRVAVMGCVVNGPGEAREADLGVASGNGKGQIFVRGEVIKTVPEAQIVETLIEEAMRLAAEMGEQAPGATPSGSPIVTVS</sequence>
<comment type="function">
    <text evidence="1">Converts 2C-methyl-D-erythritol 2,4-cyclodiphosphate (ME-2,4cPP) into 1-hydroxy-2-methyl-2-(E)-butenyl 4-diphosphate.</text>
</comment>
<comment type="catalytic activity">
    <reaction evidence="1">
        <text>(2E)-4-hydroxy-3-methylbut-2-enyl diphosphate + oxidized [flavodoxin] + H2O + 2 H(+) = 2-C-methyl-D-erythritol 2,4-cyclic diphosphate + reduced [flavodoxin]</text>
        <dbReference type="Rhea" id="RHEA:43604"/>
        <dbReference type="Rhea" id="RHEA-COMP:10622"/>
        <dbReference type="Rhea" id="RHEA-COMP:10623"/>
        <dbReference type="ChEBI" id="CHEBI:15377"/>
        <dbReference type="ChEBI" id="CHEBI:15378"/>
        <dbReference type="ChEBI" id="CHEBI:57618"/>
        <dbReference type="ChEBI" id="CHEBI:58210"/>
        <dbReference type="ChEBI" id="CHEBI:58483"/>
        <dbReference type="ChEBI" id="CHEBI:128753"/>
        <dbReference type="EC" id="1.17.7.3"/>
    </reaction>
</comment>
<comment type="cofactor">
    <cofactor evidence="1">
        <name>[4Fe-4S] cluster</name>
        <dbReference type="ChEBI" id="CHEBI:49883"/>
    </cofactor>
    <text evidence="1">Binds 1 [4Fe-4S] cluster.</text>
</comment>
<comment type="pathway">
    <text evidence="1">Isoprenoid biosynthesis; isopentenyl diphosphate biosynthesis via DXP pathway; isopentenyl diphosphate from 1-deoxy-D-xylulose 5-phosphate: step 5/6.</text>
</comment>
<comment type="similarity">
    <text evidence="1">Belongs to the IspG family.</text>
</comment>
<reference key="1">
    <citation type="journal article" date="2003" name="Proc. Natl. Acad. Sci. U.S.A.">
        <title>The complete genome sequence of Mycobacterium bovis.</title>
        <authorList>
            <person name="Garnier T."/>
            <person name="Eiglmeier K."/>
            <person name="Camus J.-C."/>
            <person name="Medina N."/>
            <person name="Mansoor H."/>
            <person name="Pryor M."/>
            <person name="Duthoy S."/>
            <person name="Grondin S."/>
            <person name="Lacroix C."/>
            <person name="Monsempe C."/>
            <person name="Simon S."/>
            <person name="Harris B."/>
            <person name="Atkin R."/>
            <person name="Doggett J."/>
            <person name="Mayes R."/>
            <person name="Keating L."/>
            <person name="Wheeler P.R."/>
            <person name="Parkhill J."/>
            <person name="Barrell B.G."/>
            <person name="Cole S.T."/>
            <person name="Gordon S.V."/>
            <person name="Hewinson R.G."/>
        </authorList>
    </citation>
    <scope>NUCLEOTIDE SEQUENCE [LARGE SCALE GENOMIC DNA]</scope>
    <source>
        <strain>ATCC BAA-935 / AF2122/97</strain>
    </source>
</reference>
<reference key="2">
    <citation type="journal article" date="2017" name="Genome Announc.">
        <title>Updated reference genome sequence and annotation of Mycobacterium bovis AF2122/97.</title>
        <authorList>
            <person name="Malone K.M."/>
            <person name="Farrell D."/>
            <person name="Stuber T.P."/>
            <person name="Schubert O.T."/>
            <person name="Aebersold R."/>
            <person name="Robbe-Austerman S."/>
            <person name="Gordon S.V."/>
        </authorList>
    </citation>
    <scope>NUCLEOTIDE SEQUENCE [LARGE SCALE GENOMIC DNA]</scope>
    <scope>GENOME REANNOTATION</scope>
    <source>
        <strain>ATCC BAA-935 / AF2122/97</strain>
    </source>
</reference>
<evidence type="ECO:0000255" key="1">
    <source>
        <dbReference type="HAMAP-Rule" id="MF_00159"/>
    </source>
</evidence>
<keyword id="KW-0004">4Fe-4S</keyword>
<keyword id="KW-0408">Iron</keyword>
<keyword id="KW-0411">Iron-sulfur</keyword>
<keyword id="KW-0414">Isoprene biosynthesis</keyword>
<keyword id="KW-0479">Metal-binding</keyword>
<keyword id="KW-0560">Oxidoreductase</keyword>
<keyword id="KW-1185">Reference proteome</keyword>